<sequence length="516" mass="58623">MNMDSIASFSHPFLWTAFAVGVVYCCTRMVSELFLSPLSHIPGPKLAACTRLYEFFYDVICHGRYTFKIAELHEKYGPIVRISPTEIHINDPEFYETLYSTSAPRNKDPWFTTNFDVAESAFSTLDYRLHRPRRALIAPYFAKARVDRIQPLIQGKITKLMRQLDEYARAGKPLKVDVAYNCFTADVITGYTSYRPLGYLDTPDMVPIWSETVRNLVEIGMIARHLPGFFPLLASTGARCIQMVYPKLLSVIAFRVKCIQEVNFMWTHPETATKDAAQAECSEPALFPELVSRASTTPDITEERVLHEFITIVAAGTETTAHTMTVCTFHILNNKDILRRLRAELNDKFPGDATMDLQTLEQLPYLTGIIYEGLRLSYGLSHRLQRISPTDPLKYKDVVIPPNTPVGMSSALIHHDETIFPQSHAFIPDRWTDINERRRLNKYMVAFSKGSRQCIGMNLAFAELYMAVAALFRKYDMELQDTTVDDVKLHSDMMLPHAKKGSKGVRVILKPAQGGE</sequence>
<gene>
    <name evidence="6" type="primary">otaC</name>
    <name evidence="7" type="synonym">OTAp450</name>
    <name type="ORF">ASPCADRAFT_517149</name>
</gene>
<reference key="1">
    <citation type="journal article" date="2017" name="Genome Biol.">
        <title>Comparative genomics reveals high biological diversity and specific adaptations in the industrially and medically important fungal genus Aspergillus.</title>
        <authorList>
            <person name="de Vries R.P."/>
            <person name="Riley R."/>
            <person name="Wiebenga A."/>
            <person name="Aguilar-Osorio G."/>
            <person name="Amillis S."/>
            <person name="Uchima C.A."/>
            <person name="Anderluh G."/>
            <person name="Asadollahi M."/>
            <person name="Askin M."/>
            <person name="Barry K."/>
            <person name="Battaglia E."/>
            <person name="Bayram O."/>
            <person name="Benocci T."/>
            <person name="Braus-Stromeyer S.A."/>
            <person name="Caldana C."/>
            <person name="Canovas D."/>
            <person name="Cerqueira G.C."/>
            <person name="Chen F."/>
            <person name="Chen W."/>
            <person name="Choi C."/>
            <person name="Clum A."/>
            <person name="Dos Santos R.A."/>
            <person name="Damasio A.R."/>
            <person name="Diallinas G."/>
            <person name="Emri T."/>
            <person name="Fekete E."/>
            <person name="Flipphi M."/>
            <person name="Freyberg S."/>
            <person name="Gallo A."/>
            <person name="Gournas C."/>
            <person name="Habgood R."/>
            <person name="Hainaut M."/>
            <person name="Harispe M.L."/>
            <person name="Henrissat B."/>
            <person name="Hilden K.S."/>
            <person name="Hope R."/>
            <person name="Hossain A."/>
            <person name="Karabika E."/>
            <person name="Karaffa L."/>
            <person name="Karanyi Z."/>
            <person name="Krasevec N."/>
            <person name="Kuo A."/>
            <person name="Kusch H."/>
            <person name="LaButti K."/>
            <person name="Lagendijk E.L."/>
            <person name="Lapidus A."/>
            <person name="Levasseur A."/>
            <person name="Lindquist E."/>
            <person name="Lipzen A."/>
            <person name="Logrieco A.F."/>
            <person name="MacCabe A."/>
            <person name="Maekelae M.R."/>
            <person name="Malavazi I."/>
            <person name="Melin P."/>
            <person name="Meyer V."/>
            <person name="Mielnichuk N."/>
            <person name="Miskei M."/>
            <person name="Molnar A.P."/>
            <person name="Mule G."/>
            <person name="Ngan C.Y."/>
            <person name="Orejas M."/>
            <person name="Orosz E."/>
            <person name="Ouedraogo J.P."/>
            <person name="Overkamp K.M."/>
            <person name="Park H.-S."/>
            <person name="Perrone G."/>
            <person name="Piumi F."/>
            <person name="Punt P.J."/>
            <person name="Ram A.F."/>
            <person name="Ramon A."/>
            <person name="Rauscher S."/>
            <person name="Record E."/>
            <person name="Riano-Pachon D.M."/>
            <person name="Robert V."/>
            <person name="Roehrig J."/>
            <person name="Ruller R."/>
            <person name="Salamov A."/>
            <person name="Salih N.S."/>
            <person name="Samson R.A."/>
            <person name="Sandor E."/>
            <person name="Sanguinetti M."/>
            <person name="Schuetze T."/>
            <person name="Sepcic K."/>
            <person name="Shelest E."/>
            <person name="Sherlock G."/>
            <person name="Sophianopoulou V."/>
            <person name="Squina F.M."/>
            <person name="Sun H."/>
            <person name="Susca A."/>
            <person name="Todd R.B."/>
            <person name="Tsang A."/>
            <person name="Unkles S.E."/>
            <person name="van de Wiele N."/>
            <person name="van Rossen-Uffink D."/>
            <person name="Oliveira J.V."/>
            <person name="Vesth T.C."/>
            <person name="Visser J."/>
            <person name="Yu J.-H."/>
            <person name="Zhou M."/>
            <person name="Andersen M.R."/>
            <person name="Archer D.B."/>
            <person name="Baker S.E."/>
            <person name="Benoit I."/>
            <person name="Brakhage A.A."/>
            <person name="Braus G.H."/>
            <person name="Fischer R."/>
            <person name="Frisvad J.C."/>
            <person name="Goldman G.H."/>
            <person name="Houbraken J."/>
            <person name="Oakley B."/>
            <person name="Pocsi I."/>
            <person name="Scazzocchio C."/>
            <person name="Seiboth B."/>
            <person name="vanKuyk P.A."/>
            <person name="Wortman J."/>
            <person name="Dyer P.S."/>
            <person name="Grigoriev I.V."/>
        </authorList>
    </citation>
    <scope>NUCLEOTIDE SEQUENCE [LARGE SCALE GENOMIC DNA]</scope>
    <source>
        <strain>ITEM 5010</strain>
    </source>
</reference>
<reference key="2">
    <citation type="journal article" date="2018" name="Appl. Environ. Microbiol.">
        <title>A consensus ochratoxin A biosynthetic pathway: insights from the genome sequence of Aspergillus ochraceus and a comparative genomic analysis.</title>
        <authorList>
            <person name="Wang Y."/>
            <person name="Wang L."/>
            <person name="Wu F."/>
            <person name="Liu F."/>
            <person name="Wang Q."/>
            <person name="Zhang X."/>
            <person name="Selvaraj J.N."/>
            <person name="Zhao Y."/>
            <person name="Xing F."/>
            <person name="Yin W.B."/>
            <person name="Liu Y."/>
        </authorList>
    </citation>
    <scope>FUNCTION</scope>
    <scope>DISRUPTION PHENOTYPE</scope>
    <scope>INDUCTION</scope>
    <scope>PATHWAY</scope>
</reference>
<reference key="3">
    <citation type="journal article" date="2020" name="Front. Microbiol.">
        <title>Comparative genomic analysis of ochratoxin A biosynthetic cluster in producing fungi: new evidence of a cyclase gene involvement.</title>
        <authorList>
            <person name="Ferrara M."/>
            <person name="Gallo A."/>
            <person name="Perrone G."/>
            <person name="Magista D."/>
            <person name="Baker S.E."/>
        </authorList>
    </citation>
    <scope>FUNCTION</scope>
</reference>
<reference key="4">
    <citation type="journal article" date="2021" name="Toxins">
        <title>Functional role of Aspergillus carbonarius AcOTAbZIP gene, a bZIP transcription factor within the OTA gene cluster.</title>
        <authorList>
            <person name="Gerin D."/>
            <person name="Garrapa F."/>
            <person name="Ballester A.R."/>
            <person name="Gonzalez-Candelas L."/>
            <person name="De Miccolis Angelini R.M."/>
            <person name="Faretra F."/>
            <person name="Pollastro S."/>
        </authorList>
    </citation>
    <scope>INDUCTION</scope>
</reference>
<reference key="5">
    <citation type="journal article" date="2022" name="Food Microbiol.">
        <title>Three stilbenes make difference to the antifungal effects on ochratoxin A and its precursor production of Aspergillus carbonarius.</title>
        <authorList>
            <person name="Cai X."/>
            <person name="Qi J."/>
            <person name="Xu Z."/>
            <person name="Huang L."/>
            <person name="Li Y."/>
            <person name="Ren X."/>
            <person name="Kong Q."/>
        </authorList>
    </citation>
    <scope>INDUCTION</scope>
    <scope>BIOTECHNOLOGY</scope>
</reference>
<name>OTAC_ASPC5</name>
<dbReference type="EC" id="1.14.14.-" evidence="9"/>
<dbReference type="EMBL" id="KV907504">
    <property type="protein sequence ID" value="OOF93602.1"/>
    <property type="molecule type" value="Genomic_DNA"/>
</dbReference>
<dbReference type="SMR" id="A0A1R3RGJ7"/>
<dbReference type="STRING" id="602072.A0A1R3RGJ7"/>
<dbReference type="VEuPathDB" id="FungiDB:ASPCADRAFT_517149"/>
<dbReference type="OMA" id="EFWFDFV"/>
<dbReference type="OrthoDB" id="3945418at2759"/>
<dbReference type="BioCyc" id="MetaCyc:MONOMER-21060"/>
<dbReference type="Proteomes" id="UP000188318">
    <property type="component" value="Unassembled WGS sequence"/>
</dbReference>
<dbReference type="GO" id="GO:0016020">
    <property type="term" value="C:membrane"/>
    <property type="evidence" value="ECO:0007669"/>
    <property type="project" value="UniProtKB-SubCell"/>
</dbReference>
<dbReference type="GO" id="GO:0020037">
    <property type="term" value="F:heme binding"/>
    <property type="evidence" value="ECO:0007669"/>
    <property type="project" value="InterPro"/>
</dbReference>
<dbReference type="GO" id="GO:0005506">
    <property type="term" value="F:iron ion binding"/>
    <property type="evidence" value="ECO:0007669"/>
    <property type="project" value="InterPro"/>
</dbReference>
<dbReference type="GO" id="GO:0004497">
    <property type="term" value="F:monooxygenase activity"/>
    <property type="evidence" value="ECO:0007669"/>
    <property type="project" value="UniProtKB-KW"/>
</dbReference>
<dbReference type="GO" id="GO:0016491">
    <property type="term" value="F:oxidoreductase activity"/>
    <property type="evidence" value="ECO:0000315"/>
    <property type="project" value="UniProt"/>
</dbReference>
<dbReference type="GO" id="GO:0016705">
    <property type="term" value="F:oxidoreductase activity, acting on paired donors, with incorporation or reduction of molecular oxygen"/>
    <property type="evidence" value="ECO:0007669"/>
    <property type="project" value="InterPro"/>
</dbReference>
<dbReference type="GO" id="GO:1900818">
    <property type="term" value="P:ochratoxin A biosynthetic process"/>
    <property type="evidence" value="ECO:0000315"/>
    <property type="project" value="GO_Central"/>
</dbReference>
<dbReference type="CDD" id="cd11062">
    <property type="entry name" value="CYP58-like"/>
    <property type="match status" value="1"/>
</dbReference>
<dbReference type="FunFam" id="1.10.630.10:FF:000069">
    <property type="entry name" value="Cytochrome P450, putative (Eurofung)"/>
    <property type="match status" value="1"/>
</dbReference>
<dbReference type="Gene3D" id="1.10.630.10">
    <property type="entry name" value="Cytochrome P450"/>
    <property type="match status" value="1"/>
</dbReference>
<dbReference type="InterPro" id="IPR001128">
    <property type="entry name" value="Cyt_P450"/>
</dbReference>
<dbReference type="InterPro" id="IPR017972">
    <property type="entry name" value="Cyt_P450_CS"/>
</dbReference>
<dbReference type="InterPro" id="IPR002401">
    <property type="entry name" value="Cyt_P450_E_grp-I"/>
</dbReference>
<dbReference type="InterPro" id="IPR036396">
    <property type="entry name" value="Cyt_P450_sf"/>
</dbReference>
<dbReference type="InterPro" id="IPR050121">
    <property type="entry name" value="Cytochrome_P450_monoxygenase"/>
</dbReference>
<dbReference type="PANTHER" id="PTHR24305">
    <property type="entry name" value="CYTOCHROME P450"/>
    <property type="match status" value="1"/>
</dbReference>
<dbReference type="PANTHER" id="PTHR24305:SF157">
    <property type="entry name" value="N-ACETYLTRYPTOPHAN 6-HYDROXYLASE IVOC-RELATED"/>
    <property type="match status" value="1"/>
</dbReference>
<dbReference type="Pfam" id="PF00067">
    <property type="entry name" value="p450"/>
    <property type="match status" value="1"/>
</dbReference>
<dbReference type="PRINTS" id="PR00463">
    <property type="entry name" value="EP450I"/>
</dbReference>
<dbReference type="PRINTS" id="PR00385">
    <property type="entry name" value="P450"/>
</dbReference>
<dbReference type="SUPFAM" id="SSF48264">
    <property type="entry name" value="Cytochrome P450"/>
    <property type="match status" value="1"/>
</dbReference>
<dbReference type="PROSITE" id="PS00086">
    <property type="entry name" value="CYTOCHROME_P450"/>
    <property type="match status" value="1"/>
</dbReference>
<proteinExistence type="evidence at protein level"/>
<organism>
    <name type="scientific">Aspergillus carbonarius (strain ITEM 5010)</name>
    <dbReference type="NCBI Taxonomy" id="602072"/>
    <lineage>
        <taxon>Eukaryota</taxon>
        <taxon>Fungi</taxon>
        <taxon>Dikarya</taxon>
        <taxon>Ascomycota</taxon>
        <taxon>Pezizomycotina</taxon>
        <taxon>Eurotiomycetes</taxon>
        <taxon>Eurotiomycetidae</taxon>
        <taxon>Eurotiales</taxon>
        <taxon>Aspergillaceae</taxon>
        <taxon>Aspergillus</taxon>
        <taxon>Aspergillus subgen. Circumdati</taxon>
    </lineage>
</organism>
<accession>A0A1R3RGJ7</accession>
<evidence type="ECO:0000250" key="1">
    <source>
        <dbReference type="UniProtKB" id="P04798"/>
    </source>
</evidence>
<evidence type="ECO:0000255" key="2"/>
<evidence type="ECO:0000269" key="3">
    <source>
    </source>
</evidence>
<evidence type="ECO:0000269" key="4">
    <source>
    </source>
</evidence>
<evidence type="ECO:0000269" key="5">
    <source>
    </source>
</evidence>
<evidence type="ECO:0000303" key="6">
    <source>
    </source>
</evidence>
<evidence type="ECO:0000303" key="7">
    <source>
    </source>
</evidence>
<evidence type="ECO:0000305" key="8"/>
<evidence type="ECO:0000305" key="9">
    <source>
    </source>
</evidence>
<evidence type="ECO:0000305" key="10">
    <source>
    </source>
</evidence>
<keyword id="KW-0349">Heme</keyword>
<keyword id="KW-0408">Iron</keyword>
<keyword id="KW-0472">Membrane</keyword>
<keyword id="KW-0479">Metal-binding</keyword>
<keyword id="KW-0503">Monooxygenase</keyword>
<keyword id="KW-0560">Oxidoreductase</keyword>
<keyword id="KW-1185">Reference proteome</keyword>
<keyword id="KW-0812">Transmembrane</keyword>
<keyword id="KW-1133">Transmembrane helix</keyword>
<comment type="function">
    <text evidence="3 10">Cytochrome P450 monooxygenase; part of the gene cluster that mediates the biosynthesis of ochratoxin A (OTA), a mycotoxin composed of a chlorinated type I polyketide dihydroisocoumarin moiety linked to L-phenylalanine, and demonstrated to have nephrotoxic, immunotoxic, genotoxic, neurotoxic, and teratogenic properties (PubMed:30054361). OtaC catalyzes the oxidation of 7-methylmellein (7-MM) into 7-carboxymellein (PubMed:30054361). The pathway begins with the highly reducing polyketide synthase otaA that catalyzes the formation of the isocoumarin group during the initial stages of biosynthesis, starting from one acetate and 4 malonate units, to originate the characteristic pentaketide skeleton 7-methylmellein (7-MM) of the OTA molecule. The newly identified cyclase otaY might be involved in the polyketide cyclization reaction during the initial steps of the OTA biosynthesis. 7-MM is then oxidized into 7-carboxymellein (also called ochratoxin beta) by the cytochrome P450 monooxygenase otaC. The NRPS encoded by the otaB gene is involved in the linking of phenylalanine to the dihydroisocoumarin ring. The reaction catalyzed by NRPS results in the production of ochratoxin B (OTB), which is the non-chlorinated analog of OTA and which subsequently serves as the substrate of the halogenase otaD for chlorination activity to form the final molecular structure of OTA, containing a chlorine atom in the C-5 position of the molecule (Probable) (PubMed:33391201).</text>
</comment>
<comment type="catalytic activity">
    <reaction evidence="9">
        <text>7-methylmellein + 3 reduced [NADPH--hemoprotein reductase] + 3 O2 = 7-carboxymellein + 3 oxidized [NADPH--hemoprotein reductase] + 4 H2O + 4 H(+)</text>
        <dbReference type="Rhea" id="RHEA:72771"/>
        <dbReference type="Rhea" id="RHEA-COMP:11964"/>
        <dbReference type="Rhea" id="RHEA-COMP:11965"/>
        <dbReference type="ChEBI" id="CHEBI:15377"/>
        <dbReference type="ChEBI" id="CHEBI:15378"/>
        <dbReference type="ChEBI" id="CHEBI:15379"/>
        <dbReference type="ChEBI" id="CHEBI:57618"/>
        <dbReference type="ChEBI" id="CHEBI:58210"/>
        <dbReference type="ChEBI" id="CHEBI:192524"/>
        <dbReference type="ChEBI" id="CHEBI:192525"/>
    </reaction>
    <physiologicalReaction direction="left-to-right" evidence="9">
        <dbReference type="Rhea" id="RHEA:72772"/>
    </physiologicalReaction>
</comment>
<comment type="cofactor">
    <cofactor evidence="1">
        <name>heme</name>
        <dbReference type="ChEBI" id="CHEBI:30413"/>
    </cofactor>
</comment>
<comment type="pathway">
    <text evidence="3">Mycotoxin biosynthesis.</text>
</comment>
<comment type="subcellular location">
    <subcellularLocation>
        <location evidence="2">Membrane</location>
        <topology evidence="2">Single-pass membrane protein</topology>
    </subcellularLocation>
</comment>
<comment type="induction">
    <text evidence="3 4 5">Expression is positively regulated by the cluster-specific transcription factor otaR1 (PubMed:30054361, PubMed:33540740). Stilbenes such as resveratrol, piceatannol and pterostilbene downregulate the expression of the ochratoxin cluster (PubMed:35082059).</text>
</comment>
<comment type="disruption phenotype">
    <text evidence="3">Abolishes the production of ochratoxin A as well as of its intermediates ochratoxin B and ochratoxin beta.</text>
</comment>
<comment type="biotechnology">
    <text evidence="5">Stilbenes such as resveratrol, piceatannol and pterostilbene affect the expression of the OTA cluster to reduce ochratoxin A and B production and thus could be used as naturally safe and efficient compounds in food active packaging or preservatives against ochratoxin A in food (PubMed:35082059). Pterostilbene with methoxy groups demonstrated greater inhibitory and antitoxic activity than resveratrol and piceatannol (PubMed:35082059).</text>
</comment>
<comment type="similarity">
    <text evidence="8">Belongs to the cytochrome P450 family.</text>
</comment>
<protein>
    <recommendedName>
        <fullName evidence="6">Cytochrome P450 monooxygenase otaC</fullName>
        <ecNumber evidence="9">1.14.14.-</ecNumber>
    </recommendedName>
    <alternativeName>
        <fullName evidence="6">Ochratoxin A biosynthesis cluster protein C</fullName>
    </alternativeName>
</protein>
<feature type="chain" id="PRO_0000440590" description="Cytochrome P450 monooxygenase otaC" evidence="2">
    <location>
        <begin position="1"/>
        <end position="516"/>
    </location>
</feature>
<feature type="transmembrane region" description="Helical" evidence="2">
    <location>
        <begin position="13"/>
        <end position="30"/>
    </location>
</feature>
<feature type="binding site" description="axial binding residue" evidence="1">
    <location>
        <position position="454"/>
    </location>
    <ligand>
        <name>heme</name>
        <dbReference type="ChEBI" id="CHEBI:30413"/>
    </ligand>
    <ligandPart>
        <name>Fe</name>
        <dbReference type="ChEBI" id="CHEBI:18248"/>
    </ligandPart>
</feature>